<name>PDZD9_BOVIN</name>
<dbReference type="EMBL" id="BC109887">
    <property type="protein sequence ID" value="AAI09888.1"/>
    <property type="molecule type" value="mRNA"/>
</dbReference>
<dbReference type="RefSeq" id="NP_001069562.1">
    <property type="nucleotide sequence ID" value="NM_001076094.1"/>
</dbReference>
<dbReference type="RefSeq" id="XP_010817618.1">
    <property type="nucleotide sequence ID" value="XM_010819316.2"/>
</dbReference>
<dbReference type="RefSeq" id="XP_024840766.1">
    <property type="nucleotide sequence ID" value="XM_024984998.2"/>
</dbReference>
<dbReference type="RefSeq" id="XP_059737376.1">
    <property type="nucleotide sequence ID" value="XM_059881393.1"/>
</dbReference>
<dbReference type="RefSeq" id="XP_059737377.1">
    <property type="nucleotide sequence ID" value="XM_059881394.1"/>
</dbReference>
<dbReference type="SMR" id="Q32KW7"/>
<dbReference type="FunCoup" id="Q32KW7">
    <property type="interactions" value="12"/>
</dbReference>
<dbReference type="STRING" id="9913.ENSBTAP00000028854"/>
<dbReference type="PaxDb" id="9913-ENSBTAP00000028854"/>
<dbReference type="Ensembl" id="ENSBTAT00000028854.4">
    <property type="protein sequence ID" value="ENSBTAP00000028854.3"/>
    <property type="gene ID" value="ENSBTAG00000021652.5"/>
</dbReference>
<dbReference type="GeneID" id="537386"/>
<dbReference type="KEGG" id="bta:537386"/>
<dbReference type="CTD" id="255762"/>
<dbReference type="VEuPathDB" id="HostDB:ENSBTAG00000021652"/>
<dbReference type="VGNC" id="VGNC:32729">
    <property type="gene designation" value="PDZD9"/>
</dbReference>
<dbReference type="eggNOG" id="ENOG502RYRV">
    <property type="taxonomic scope" value="Eukaryota"/>
</dbReference>
<dbReference type="GeneTree" id="ENSGT00390000008326"/>
<dbReference type="HOGENOM" id="CLU_095719_0_0_1"/>
<dbReference type="InParanoid" id="Q32KW7"/>
<dbReference type="OMA" id="YWTMVKH"/>
<dbReference type="OrthoDB" id="9900486at2759"/>
<dbReference type="TreeFam" id="TF337738"/>
<dbReference type="Proteomes" id="UP000009136">
    <property type="component" value="Chromosome 25"/>
</dbReference>
<dbReference type="Bgee" id="ENSBTAG00000021652">
    <property type="expression patterns" value="Expressed in semen and 91 other cell types or tissues"/>
</dbReference>
<dbReference type="Gene3D" id="2.30.42.10">
    <property type="match status" value="1"/>
</dbReference>
<dbReference type="InterPro" id="IPR001478">
    <property type="entry name" value="PDZ"/>
</dbReference>
<dbReference type="InterPro" id="IPR036034">
    <property type="entry name" value="PDZ_sf"/>
</dbReference>
<dbReference type="InterPro" id="IPR039179">
    <property type="entry name" value="PDZD9"/>
</dbReference>
<dbReference type="PANTHER" id="PTHR22698">
    <property type="entry name" value="PDZ DOMAIN-CONTAINING PROTEIN 9"/>
    <property type="match status" value="1"/>
</dbReference>
<dbReference type="PANTHER" id="PTHR22698:SF1">
    <property type="entry name" value="PDZ DOMAIN-CONTAINING PROTEIN 9"/>
    <property type="match status" value="1"/>
</dbReference>
<dbReference type="SMART" id="SM00228">
    <property type="entry name" value="PDZ"/>
    <property type="match status" value="1"/>
</dbReference>
<dbReference type="SUPFAM" id="SSF50156">
    <property type="entry name" value="PDZ domain-like"/>
    <property type="match status" value="1"/>
</dbReference>
<dbReference type="PROSITE" id="PS50106">
    <property type="entry name" value="PDZ"/>
    <property type="match status" value="1"/>
</dbReference>
<gene>
    <name type="primary">PDZD9</name>
</gene>
<evidence type="ECO:0000255" key="1">
    <source>
        <dbReference type="PROSITE-ProRule" id="PRU00143"/>
    </source>
</evidence>
<reference key="1">
    <citation type="submission" date="2005-11" db="EMBL/GenBank/DDBJ databases">
        <authorList>
            <consortium name="NIH - Mammalian Gene Collection (MGC) project"/>
        </authorList>
    </citation>
    <scope>NUCLEOTIDE SEQUENCE [LARGE SCALE MRNA]</scope>
    <source>
        <strain>Crossbred X Angus</strain>
        <tissue>Liver</tissue>
    </source>
</reference>
<proteinExistence type="evidence at transcript level"/>
<protein>
    <recommendedName>
        <fullName>PDZ domain-containing protein 9</fullName>
    </recommendedName>
</protein>
<organism>
    <name type="scientific">Bos taurus</name>
    <name type="common">Bovine</name>
    <dbReference type="NCBI Taxonomy" id="9913"/>
    <lineage>
        <taxon>Eukaryota</taxon>
        <taxon>Metazoa</taxon>
        <taxon>Chordata</taxon>
        <taxon>Craniata</taxon>
        <taxon>Vertebrata</taxon>
        <taxon>Euteleostomi</taxon>
        <taxon>Mammalia</taxon>
        <taxon>Eutheria</taxon>
        <taxon>Laurasiatheria</taxon>
        <taxon>Artiodactyla</taxon>
        <taxon>Ruminantia</taxon>
        <taxon>Pecora</taxon>
        <taxon>Bovidae</taxon>
        <taxon>Bovinae</taxon>
        <taxon>Bos</taxon>
    </lineage>
</organism>
<keyword id="KW-1185">Reference proteome</keyword>
<sequence length="263" mass="29794">MKKSVQKNVKGKQVNLKVKPSVHDLSKTQQTKLTVGSMGLGLIIIQHGPYLQISHLITKGAAARDGTLQPGDVLISVGYANVLGYTLREFLKLLQHITIGTILQIKVYRDFIDIPQEWQEIYDLIPETKFPITRTTKKTEEAKDGSVTSSDDDEAFDTRLKYYKYPRSTGHYPVRRPMSISREWHGYKKKNHVMRVGKDINCDVMIHRDHKKEVRAPSPYWTMVKQDNEISSSSSASSTSDAFWLEDCTPVEKGSSEPVSRVG</sequence>
<feature type="chain" id="PRO_0000271214" description="PDZ domain-containing protein 9">
    <location>
        <begin position="1"/>
        <end position="263"/>
    </location>
</feature>
<feature type="domain" description="PDZ" evidence="1">
    <location>
        <begin position="30"/>
        <end position="109"/>
    </location>
</feature>
<accession>Q32KW7</accession>